<name>LSPA_PSEPF</name>
<sequence>MPNAVGRFGRLSWLWLSLLVLVIDQASKFYFEGKLEMFQQIVVIPDLFSWTLAYNTGAAFSFLADSSGWQRWLFALIAIAVSAVLVVWLKRLGRNETWLAIALALVLGGALGNLYDRIALGHVIDFILVHWQNRWYFPAFNFADSAITVGAVMLALDMFKSKKTGEAVHD</sequence>
<gene>
    <name evidence="1" type="primary">lspA</name>
    <name type="ordered locus">Pfl01_4851</name>
</gene>
<dbReference type="EC" id="3.4.23.36" evidence="1"/>
<dbReference type="EMBL" id="CP000094">
    <property type="protein sequence ID" value="ABA76588.1"/>
    <property type="molecule type" value="Genomic_DNA"/>
</dbReference>
<dbReference type="RefSeq" id="WP_011336004.1">
    <property type="nucleotide sequence ID" value="NC_007492.2"/>
</dbReference>
<dbReference type="SMR" id="Q3K6L6"/>
<dbReference type="KEGG" id="pfo:Pfl01_4851"/>
<dbReference type="eggNOG" id="COG0597">
    <property type="taxonomic scope" value="Bacteria"/>
</dbReference>
<dbReference type="HOGENOM" id="CLU_083252_4_0_6"/>
<dbReference type="UniPathway" id="UPA00665"/>
<dbReference type="Proteomes" id="UP000002704">
    <property type="component" value="Chromosome"/>
</dbReference>
<dbReference type="GO" id="GO:0005886">
    <property type="term" value="C:plasma membrane"/>
    <property type="evidence" value="ECO:0007669"/>
    <property type="project" value="UniProtKB-SubCell"/>
</dbReference>
<dbReference type="GO" id="GO:0004190">
    <property type="term" value="F:aspartic-type endopeptidase activity"/>
    <property type="evidence" value="ECO:0007669"/>
    <property type="project" value="UniProtKB-UniRule"/>
</dbReference>
<dbReference type="GO" id="GO:0006508">
    <property type="term" value="P:proteolysis"/>
    <property type="evidence" value="ECO:0007669"/>
    <property type="project" value="UniProtKB-KW"/>
</dbReference>
<dbReference type="HAMAP" id="MF_00161">
    <property type="entry name" value="LspA"/>
    <property type="match status" value="1"/>
</dbReference>
<dbReference type="InterPro" id="IPR001872">
    <property type="entry name" value="Peptidase_A8"/>
</dbReference>
<dbReference type="NCBIfam" id="TIGR00077">
    <property type="entry name" value="lspA"/>
    <property type="match status" value="1"/>
</dbReference>
<dbReference type="PANTHER" id="PTHR33695">
    <property type="entry name" value="LIPOPROTEIN SIGNAL PEPTIDASE"/>
    <property type="match status" value="1"/>
</dbReference>
<dbReference type="PANTHER" id="PTHR33695:SF1">
    <property type="entry name" value="LIPOPROTEIN SIGNAL PEPTIDASE"/>
    <property type="match status" value="1"/>
</dbReference>
<dbReference type="Pfam" id="PF01252">
    <property type="entry name" value="Peptidase_A8"/>
    <property type="match status" value="1"/>
</dbReference>
<dbReference type="PRINTS" id="PR00781">
    <property type="entry name" value="LIPOSIGPTASE"/>
</dbReference>
<dbReference type="PROSITE" id="PS00855">
    <property type="entry name" value="SPASE_II"/>
    <property type="match status" value="1"/>
</dbReference>
<protein>
    <recommendedName>
        <fullName evidence="1">Lipoprotein signal peptidase</fullName>
        <ecNumber evidence="1">3.4.23.36</ecNumber>
    </recommendedName>
    <alternativeName>
        <fullName evidence="1">Prolipoprotein signal peptidase</fullName>
    </alternativeName>
    <alternativeName>
        <fullName evidence="1">Signal peptidase II</fullName>
        <shortName evidence="1">SPase II</shortName>
    </alternativeName>
</protein>
<comment type="function">
    <text evidence="1">This protein specifically catalyzes the removal of signal peptides from prolipoproteins.</text>
</comment>
<comment type="catalytic activity">
    <reaction evidence="1">
        <text>Release of signal peptides from bacterial membrane prolipoproteins. Hydrolyzes -Xaa-Yaa-Zaa-|-(S,diacylglyceryl)Cys-, in which Xaa is hydrophobic (preferably Leu), and Yaa (Ala or Ser) and Zaa (Gly or Ala) have small, neutral side chains.</text>
        <dbReference type="EC" id="3.4.23.36"/>
    </reaction>
</comment>
<comment type="pathway">
    <text evidence="1">Protein modification; lipoprotein biosynthesis (signal peptide cleavage).</text>
</comment>
<comment type="subcellular location">
    <subcellularLocation>
        <location evidence="1">Cell inner membrane</location>
        <topology evidence="1">Multi-pass membrane protein</topology>
    </subcellularLocation>
</comment>
<comment type="similarity">
    <text evidence="1">Belongs to the peptidase A8 family.</text>
</comment>
<accession>Q3K6L6</accession>
<reference key="1">
    <citation type="journal article" date="2009" name="Genome Biol.">
        <title>Genomic and genetic analyses of diversity and plant interactions of Pseudomonas fluorescens.</title>
        <authorList>
            <person name="Silby M.W."/>
            <person name="Cerdeno-Tarraga A.M."/>
            <person name="Vernikos G.S."/>
            <person name="Giddens S.R."/>
            <person name="Jackson R.W."/>
            <person name="Preston G.M."/>
            <person name="Zhang X.-X."/>
            <person name="Moon C.D."/>
            <person name="Gehrig S.M."/>
            <person name="Godfrey S.A.C."/>
            <person name="Knight C.G."/>
            <person name="Malone J.G."/>
            <person name="Robinson Z."/>
            <person name="Spiers A.J."/>
            <person name="Harris S."/>
            <person name="Challis G.L."/>
            <person name="Yaxley A.M."/>
            <person name="Harris D."/>
            <person name="Seeger K."/>
            <person name="Murphy L."/>
            <person name="Rutter S."/>
            <person name="Squares R."/>
            <person name="Quail M.A."/>
            <person name="Saunders E."/>
            <person name="Mavromatis K."/>
            <person name="Brettin T.S."/>
            <person name="Bentley S.D."/>
            <person name="Hothersall J."/>
            <person name="Stephens E."/>
            <person name="Thomas C.M."/>
            <person name="Parkhill J."/>
            <person name="Levy S.B."/>
            <person name="Rainey P.B."/>
            <person name="Thomson N.R."/>
        </authorList>
    </citation>
    <scope>NUCLEOTIDE SEQUENCE [LARGE SCALE GENOMIC DNA]</scope>
    <source>
        <strain>Pf0-1</strain>
    </source>
</reference>
<organism>
    <name type="scientific">Pseudomonas fluorescens (strain Pf0-1)</name>
    <dbReference type="NCBI Taxonomy" id="205922"/>
    <lineage>
        <taxon>Bacteria</taxon>
        <taxon>Pseudomonadati</taxon>
        <taxon>Pseudomonadota</taxon>
        <taxon>Gammaproteobacteria</taxon>
        <taxon>Pseudomonadales</taxon>
        <taxon>Pseudomonadaceae</taxon>
        <taxon>Pseudomonas</taxon>
    </lineage>
</organism>
<proteinExistence type="inferred from homology"/>
<feature type="chain" id="PRO_0000289412" description="Lipoprotein signal peptidase">
    <location>
        <begin position="1"/>
        <end position="170"/>
    </location>
</feature>
<feature type="transmembrane region" description="Helical" evidence="1">
    <location>
        <begin position="11"/>
        <end position="31"/>
    </location>
</feature>
<feature type="transmembrane region" description="Helical" evidence="1">
    <location>
        <begin position="41"/>
        <end position="61"/>
    </location>
</feature>
<feature type="transmembrane region" description="Helical" evidence="1">
    <location>
        <begin position="69"/>
        <end position="89"/>
    </location>
</feature>
<feature type="transmembrane region" description="Helical" evidence="1">
    <location>
        <begin position="95"/>
        <end position="115"/>
    </location>
</feature>
<feature type="transmembrane region" description="Helical" evidence="1">
    <location>
        <begin position="136"/>
        <end position="156"/>
    </location>
</feature>
<feature type="active site" evidence="1">
    <location>
        <position position="125"/>
    </location>
</feature>
<feature type="active site" evidence="1">
    <location>
        <position position="144"/>
    </location>
</feature>
<keyword id="KW-0064">Aspartyl protease</keyword>
<keyword id="KW-0997">Cell inner membrane</keyword>
<keyword id="KW-1003">Cell membrane</keyword>
<keyword id="KW-0378">Hydrolase</keyword>
<keyword id="KW-0472">Membrane</keyword>
<keyword id="KW-0645">Protease</keyword>
<keyword id="KW-0812">Transmembrane</keyword>
<keyword id="KW-1133">Transmembrane helix</keyword>
<evidence type="ECO:0000255" key="1">
    <source>
        <dbReference type="HAMAP-Rule" id="MF_00161"/>
    </source>
</evidence>